<accession>Q6LU59</accession>
<keyword id="KW-0143">Chaperone</keyword>
<keyword id="KW-1185">Reference proteome</keyword>
<comment type="function">
    <text evidence="1">Co-chaperone involved in the maturation of iron-sulfur cluster-containing proteins. Seems to help targeting proteins to be folded toward HscA.</text>
</comment>
<comment type="subunit">
    <text evidence="1">Interacts with HscA and stimulates its ATPase activity.</text>
</comment>
<comment type="similarity">
    <text evidence="1">Belongs to the HscB family.</text>
</comment>
<evidence type="ECO:0000255" key="1">
    <source>
        <dbReference type="HAMAP-Rule" id="MF_00682"/>
    </source>
</evidence>
<feature type="chain" id="PRO_0000070978" description="Co-chaperone protein HscB homolog">
    <location>
        <begin position="1"/>
        <end position="171"/>
    </location>
</feature>
<feature type="domain" description="J" evidence="1">
    <location>
        <begin position="2"/>
        <end position="74"/>
    </location>
</feature>
<proteinExistence type="inferred from homology"/>
<reference key="1">
    <citation type="journal article" date="2005" name="Science">
        <title>Life at depth: Photobacterium profundum genome sequence and expression analysis.</title>
        <authorList>
            <person name="Vezzi A."/>
            <person name="Campanaro S."/>
            <person name="D'Angelo M."/>
            <person name="Simonato F."/>
            <person name="Vitulo N."/>
            <person name="Lauro F.M."/>
            <person name="Cestaro A."/>
            <person name="Malacrida G."/>
            <person name="Simionati B."/>
            <person name="Cannata N."/>
            <person name="Romualdi C."/>
            <person name="Bartlett D.H."/>
            <person name="Valle G."/>
        </authorList>
    </citation>
    <scope>NUCLEOTIDE SEQUENCE [LARGE SCALE GENOMIC DNA]</scope>
    <source>
        <strain>ATCC BAA-1253 / SS9</strain>
    </source>
</reference>
<gene>
    <name evidence="1" type="primary">hscB</name>
    <name type="ordered locus">PBPRA0753</name>
</gene>
<sequence>MNHFELFRLPFQFELDGGLLSTQFRELQRRFHPDNFATASERDRLMSVQKAAQINDAFQTLKNPISRAEYMLSEQDMDIRGEQKTLQDPEFLMQQMELREELEDISDASDPESALFDFEQQVTALYKSQLSALEQLLNQDDWEEAADAVRKLKFIDKLRYEIERLEETFFD</sequence>
<name>HSCB_PHOPR</name>
<protein>
    <recommendedName>
        <fullName evidence="1">Co-chaperone protein HscB homolog</fullName>
    </recommendedName>
</protein>
<organism>
    <name type="scientific">Photobacterium profundum (strain SS9)</name>
    <dbReference type="NCBI Taxonomy" id="298386"/>
    <lineage>
        <taxon>Bacteria</taxon>
        <taxon>Pseudomonadati</taxon>
        <taxon>Pseudomonadota</taxon>
        <taxon>Gammaproteobacteria</taxon>
        <taxon>Vibrionales</taxon>
        <taxon>Vibrionaceae</taxon>
        <taxon>Photobacterium</taxon>
    </lineage>
</organism>
<dbReference type="EMBL" id="CR378665">
    <property type="protein sequence ID" value="CAG19166.1"/>
    <property type="molecule type" value="Genomic_DNA"/>
</dbReference>
<dbReference type="RefSeq" id="WP_011217508.1">
    <property type="nucleotide sequence ID" value="NC_006370.1"/>
</dbReference>
<dbReference type="SMR" id="Q6LU59"/>
<dbReference type="STRING" id="298386.PBPRA0753"/>
<dbReference type="KEGG" id="ppr:PBPRA0753"/>
<dbReference type="eggNOG" id="COG1076">
    <property type="taxonomic scope" value="Bacteria"/>
</dbReference>
<dbReference type="HOGENOM" id="CLU_068529_2_0_6"/>
<dbReference type="Proteomes" id="UP000000593">
    <property type="component" value="Chromosome 1"/>
</dbReference>
<dbReference type="GO" id="GO:1990230">
    <property type="term" value="C:iron-sulfur cluster transfer complex"/>
    <property type="evidence" value="ECO:0007669"/>
    <property type="project" value="TreeGrafter"/>
</dbReference>
<dbReference type="GO" id="GO:0001671">
    <property type="term" value="F:ATPase activator activity"/>
    <property type="evidence" value="ECO:0007669"/>
    <property type="project" value="InterPro"/>
</dbReference>
<dbReference type="GO" id="GO:0051087">
    <property type="term" value="F:protein-folding chaperone binding"/>
    <property type="evidence" value="ECO:0007669"/>
    <property type="project" value="InterPro"/>
</dbReference>
<dbReference type="GO" id="GO:0044571">
    <property type="term" value="P:[2Fe-2S] cluster assembly"/>
    <property type="evidence" value="ECO:0007669"/>
    <property type="project" value="InterPro"/>
</dbReference>
<dbReference type="GO" id="GO:0051259">
    <property type="term" value="P:protein complex oligomerization"/>
    <property type="evidence" value="ECO:0007669"/>
    <property type="project" value="InterPro"/>
</dbReference>
<dbReference type="GO" id="GO:0006457">
    <property type="term" value="P:protein folding"/>
    <property type="evidence" value="ECO:0007669"/>
    <property type="project" value="UniProtKB-UniRule"/>
</dbReference>
<dbReference type="Gene3D" id="1.10.287.110">
    <property type="entry name" value="DnaJ domain"/>
    <property type="match status" value="1"/>
</dbReference>
<dbReference type="Gene3D" id="1.20.1280.20">
    <property type="entry name" value="HscB, C-terminal domain"/>
    <property type="match status" value="1"/>
</dbReference>
<dbReference type="HAMAP" id="MF_00682">
    <property type="entry name" value="HscB"/>
    <property type="match status" value="1"/>
</dbReference>
<dbReference type="InterPro" id="IPR001623">
    <property type="entry name" value="DnaJ_domain"/>
</dbReference>
<dbReference type="InterPro" id="IPR004640">
    <property type="entry name" value="HscB"/>
</dbReference>
<dbReference type="InterPro" id="IPR036386">
    <property type="entry name" value="HscB_C_sf"/>
</dbReference>
<dbReference type="InterPro" id="IPR009073">
    <property type="entry name" value="HscB_oligo_C"/>
</dbReference>
<dbReference type="InterPro" id="IPR036869">
    <property type="entry name" value="J_dom_sf"/>
</dbReference>
<dbReference type="NCBIfam" id="TIGR00714">
    <property type="entry name" value="hscB"/>
    <property type="match status" value="1"/>
</dbReference>
<dbReference type="NCBIfam" id="NF003449">
    <property type="entry name" value="PRK05014.1"/>
    <property type="match status" value="1"/>
</dbReference>
<dbReference type="PANTHER" id="PTHR14021">
    <property type="entry name" value="IRON-SULFUR CLUSTER CO-CHAPERONE PROTEIN HSCB"/>
    <property type="match status" value="1"/>
</dbReference>
<dbReference type="PANTHER" id="PTHR14021:SF15">
    <property type="entry name" value="IRON-SULFUR CLUSTER CO-CHAPERONE PROTEIN HSCB"/>
    <property type="match status" value="1"/>
</dbReference>
<dbReference type="Pfam" id="PF07743">
    <property type="entry name" value="HSCB_C"/>
    <property type="match status" value="1"/>
</dbReference>
<dbReference type="SMART" id="SM00271">
    <property type="entry name" value="DnaJ"/>
    <property type="match status" value="1"/>
</dbReference>
<dbReference type="SUPFAM" id="SSF46565">
    <property type="entry name" value="Chaperone J-domain"/>
    <property type="match status" value="1"/>
</dbReference>
<dbReference type="SUPFAM" id="SSF47144">
    <property type="entry name" value="HSC20 (HSCB), C-terminal oligomerisation domain"/>
    <property type="match status" value="1"/>
</dbReference>
<dbReference type="PROSITE" id="PS50076">
    <property type="entry name" value="DNAJ_2"/>
    <property type="match status" value="1"/>
</dbReference>